<sequence>MDLFEYQAKELFAKHNVPTTPGRVTTTAEDAKAIAEEIGKPVMIKAQVKVGGRGKAGGVKYAATPDDALTHAQNILGLDIKGHIVKKILVAEASDIAEEYYISFLLDRANRTYLAMCSVEGGVEIEVTAEENPDALAKVPVDAVKGVDLALAREIAEKGKLPAEVLDSAAVTIQKLWEVFVGEDATLVEVNPLVRTPDNQILALDGKVTLDGNADFRQPGHAEFEDKDATDPLELKAKEHDLNYVKLDGQVGIIGNGAGLVMSTLDVVAYAGENHNGVKPANFLDIGGGASAEVMAAGLDVILGDSQVKSVFVNVFGGITACDAVANGIVGALKTLGNTASKPLVVRLDGNKVEEGRAILAEFNHPLVIQAETMDAGADKAAALAAASN</sequence>
<comment type="function">
    <text evidence="1">Succinyl-CoA synthetase functions in the citric acid cycle (TCA), coupling the hydrolysis of succinyl-CoA to the synthesis of either ATP or GTP and thus represents the only step of substrate-level phosphorylation in the TCA. The beta subunit provides nucleotide specificity of the enzyme and binds the substrate succinate, while the binding sites for coenzyme A and phosphate are found in the alpha subunit.</text>
</comment>
<comment type="catalytic activity">
    <reaction evidence="1">
        <text>succinate + ATP + CoA = succinyl-CoA + ADP + phosphate</text>
        <dbReference type="Rhea" id="RHEA:17661"/>
        <dbReference type="ChEBI" id="CHEBI:30031"/>
        <dbReference type="ChEBI" id="CHEBI:30616"/>
        <dbReference type="ChEBI" id="CHEBI:43474"/>
        <dbReference type="ChEBI" id="CHEBI:57287"/>
        <dbReference type="ChEBI" id="CHEBI:57292"/>
        <dbReference type="ChEBI" id="CHEBI:456216"/>
        <dbReference type="EC" id="6.2.1.5"/>
    </reaction>
    <physiologicalReaction direction="right-to-left" evidence="1">
        <dbReference type="Rhea" id="RHEA:17663"/>
    </physiologicalReaction>
</comment>
<comment type="catalytic activity">
    <reaction evidence="1">
        <text>GTP + succinate + CoA = succinyl-CoA + GDP + phosphate</text>
        <dbReference type="Rhea" id="RHEA:22120"/>
        <dbReference type="ChEBI" id="CHEBI:30031"/>
        <dbReference type="ChEBI" id="CHEBI:37565"/>
        <dbReference type="ChEBI" id="CHEBI:43474"/>
        <dbReference type="ChEBI" id="CHEBI:57287"/>
        <dbReference type="ChEBI" id="CHEBI:57292"/>
        <dbReference type="ChEBI" id="CHEBI:58189"/>
    </reaction>
    <physiologicalReaction direction="right-to-left" evidence="1">
        <dbReference type="Rhea" id="RHEA:22122"/>
    </physiologicalReaction>
</comment>
<comment type="cofactor">
    <cofactor evidence="1">
        <name>Mg(2+)</name>
        <dbReference type="ChEBI" id="CHEBI:18420"/>
    </cofactor>
    <text evidence="1">Binds 1 Mg(2+) ion per subunit.</text>
</comment>
<comment type="pathway">
    <text evidence="1">Carbohydrate metabolism; tricarboxylic acid cycle; succinate from succinyl-CoA (ligase route): step 1/1.</text>
</comment>
<comment type="subunit">
    <text evidence="1">Heterotetramer of two alpha and two beta subunits.</text>
</comment>
<comment type="similarity">
    <text evidence="1">Belongs to the succinate/malate CoA ligase beta subunit family.</text>
</comment>
<dbReference type="EC" id="6.2.1.5" evidence="1"/>
<dbReference type="EMBL" id="CU458896">
    <property type="protein sequence ID" value="CAM61146.1"/>
    <property type="molecule type" value="Genomic_DNA"/>
</dbReference>
<dbReference type="RefSeq" id="WP_005109739.1">
    <property type="nucleotide sequence ID" value="NZ_MLCG01000004.1"/>
</dbReference>
<dbReference type="SMR" id="B1MJJ0"/>
<dbReference type="GeneID" id="93378002"/>
<dbReference type="KEGG" id="mab:MAB_1056"/>
<dbReference type="UniPathway" id="UPA00223">
    <property type="reaction ID" value="UER00999"/>
</dbReference>
<dbReference type="Proteomes" id="UP000007137">
    <property type="component" value="Chromosome"/>
</dbReference>
<dbReference type="GO" id="GO:0005829">
    <property type="term" value="C:cytosol"/>
    <property type="evidence" value="ECO:0007669"/>
    <property type="project" value="TreeGrafter"/>
</dbReference>
<dbReference type="GO" id="GO:0042709">
    <property type="term" value="C:succinate-CoA ligase complex"/>
    <property type="evidence" value="ECO:0007669"/>
    <property type="project" value="TreeGrafter"/>
</dbReference>
<dbReference type="GO" id="GO:0005524">
    <property type="term" value="F:ATP binding"/>
    <property type="evidence" value="ECO:0007669"/>
    <property type="project" value="UniProtKB-UniRule"/>
</dbReference>
<dbReference type="GO" id="GO:0000287">
    <property type="term" value="F:magnesium ion binding"/>
    <property type="evidence" value="ECO:0007669"/>
    <property type="project" value="UniProtKB-UniRule"/>
</dbReference>
<dbReference type="GO" id="GO:0004775">
    <property type="term" value="F:succinate-CoA ligase (ADP-forming) activity"/>
    <property type="evidence" value="ECO:0007669"/>
    <property type="project" value="UniProtKB-UniRule"/>
</dbReference>
<dbReference type="GO" id="GO:0004776">
    <property type="term" value="F:succinate-CoA ligase (GDP-forming) activity"/>
    <property type="evidence" value="ECO:0007669"/>
    <property type="project" value="RHEA"/>
</dbReference>
<dbReference type="GO" id="GO:0006104">
    <property type="term" value="P:succinyl-CoA metabolic process"/>
    <property type="evidence" value="ECO:0007669"/>
    <property type="project" value="TreeGrafter"/>
</dbReference>
<dbReference type="GO" id="GO:0006099">
    <property type="term" value="P:tricarboxylic acid cycle"/>
    <property type="evidence" value="ECO:0007669"/>
    <property type="project" value="UniProtKB-UniRule"/>
</dbReference>
<dbReference type="FunFam" id="3.30.1490.20:FF:000014">
    <property type="entry name" value="Succinate--CoA ligase [ADP-forming] subunit beta"/>
    <property type="match status" value="1"/>
</dbReference>
<dbReference type="FunFam" id="3.30.470.20:FF:000002">
    <property type="entry name" value="Succinate--CoA ligase [ADP-forming] subunit beta"/>
    <property type="match status" value="1"/>
</dbReference>
<dbReference type="FunFam" id="3.40.50.261:FF:000007">
    <property type="entry name" value="Succinate--CoA ligase [ADP-forming] subunit beta"/>
    <property type="match status" value="1"/>
</dbReference>
<dbReference type="Gene3D" id="3.30.1490.20">
    <property type="entry name" value="ATP-grasp fold, A domain"/>
    <property type="match status" value="1"/>
</dbReference>
<dbReference type="Gene3D" id="3.30.470.20">
    <property type="entry name" value="ATP-grasp fold, B domain"/>
    <property type="match status" value="1"/>
</dbReference>
<dbReference type="Gene3D" id="3.40.50.261">
    <property type="entry name" value="Succinyl-CoA synthetase domains"/>
    <property type="match status" value="1"/>
</dbReference>
<dbReference type="HAMAP" id="MF_00558">
    <property type="entry name" value="Succ_CoA_beta"/>
    <property type="match status" value="1"/>
</dbReference>
<dbReference type="InterPro" id="IPR011761">
    <property type="entry name" value="ATP-grasp"/>
</dbReference>
<dbReference type="InterPro" id="IPR013650">
    <property type="entry name" value="ATP-grasp_succ-CoA_synth-type"/>
</dbReference>
<dbReference type="InterPro" id="IPR013815">
    <property type="entry name" value="ATP_grasp_subdomain_1"/>
</dbReference>
<dbReference type="InterPro" id="IPR017866">
    <property type="entry name" value="Succ-CoA_synthase_bsu_CS"/>
</dbReference>
<dbReference type="InterPro" id="IPR005811">
    <property type="entry name" value="SUCC_ACL_C"/>
</dbReference>
<dbReference type="InterPro" id="IPR005809">
    <property type="entry name" value="Succ_CoA_ligase-like_bsu"/>
</dbReference>
<dbReference type="InterPro" id="IPR016102">
    <property type="entry name" value="Succinyl-CoA_synth-like"/>
</dbReference>
<dbReference type="NCBIfam" id="NF001913">
    <property type="entry name" value="PRK00696.1"/>
    <property type="match status" value="1"/>
</dbReference>
<dbReference type="NCBIfam" id="TIGR01016">
    <property type="entry name" value="sucCoAbeta"/>
    <property type="match status" value="1"/>
</dbReference>
<dbReference type="PANTHER" id="PTHR11815:SF10">
    <property type="entry name" value="SUCCINATE--COA LIGASE [GDP-FORMING] SUBUNIT BETA, MITOCHONDRIAL"/>
    <property type="match status" value="1"/>
</dbReference>
<dbReference type="PANTHER" id="PTHR11815">
    <property type="entry name" value="SUCCINYL-COA SYNTHETASE BETA CHAIN"/>
    <property type="match status" value="1"/>
</dbReference>
<dbReference type="Pfam" id="PF08442">
    <property type="entry name" value="ATP-grasp_2"/>
    <property type="match status" value="1"/>
</dbReference>
<dbReference type="Pfam" id="PF00549">
    <property type="entry name" value="Ligase_CoA"/>
    <property type="match status" value="1"/>
</dbReference>
<dbReference type="PIRSF" id="PIRSF001554">
    <property type="entry name" value="SucCS_beta"/>
    <property type="match status" value="1"/>
</dbReference>
<dbReference type="SUPFAM" id="SSF56059">
    <property type="entry name" value="Glutathione synthetase ATP-binding domain-like"/>
    <property type="match status" value="1"/>
</dbReference>
<dbReference type="SUPFAM" id="SSF52210">
    <property type="entry name" value="Succinyl-CoA synthetase domains"/>
    <property type="match status" value="1"/>
</dbReference>
<dbReference type="PROSITE" id="PS50975">
    <property type="entry name" value="ATP_GRASP"/>
    <property type="match status" value="1"/>
</dbReference>
<dbReference type="PROSITE" id="PS01217">
    <property type="entry name" value="SUCCINYL_COA_LIG_3"/>
    <property type="match status" value="1"/>
</dbReference>
<organism>
    <name type="scientific">Mycobacteroides abscessus (strain ATCC 19977 / DSM 44196 / CCUG 20993 / CIP 104536 / JCM 13569 / NCTC 13031 / TMC 1543 / L948)</name>
    <name type="common">Mycobacterium abscessus</name>
    <dbReference type="NCBI Taxonomy" id="561007"/>
    <lineage>
        <taxon>Bacteria</taxon>
        <taxon>Bacillati</taxon>
        <taxon>Actinomycetota</taxon>
        <taxon>Actinomycetes</taxon>
        <taxon>Mycobacteriales</taxon>
        <taxon>Mycobacteriaceae</taxon>
        <taxon>Mycobacteroides</taxon>
        <taxon>Mycobacteroides abscessus</taxon>
    </lineage>
</organism>
<proteinExistence type="inferred from homology"/>
<evidence type="ECO:0000255" key="1">
    <source>
        <dbReference type="HAMAP-Rule" id="MF_00558"/>
    </source>
</evidence>
<reference key="1">
    <citation type="journal article" date="2009" name="PLoS ONE">
        <title>Non mycobacterial virulence genes in the genome of the emerging pathogen Mycobacterium abscessus.</title>
        <authorList>
            <person name="Ripoll F."/>
            <person name="Pasek S."/>
            <person name="Schenowitz C."/>
            <person name="Dossat C."/>
            <person name="Barbe V."/>
            <person name="Rottman M."/>
            <person name="Macheras E."/>
            <person name="Heym B."/>
            <person name="Herrmann J.L."/>
            <person name="Daffe M."/>
            <person name="Brosch R."/>
            <person name="Risler J.L."/>
            <person name="Gaillard J.L."/>
        </authorList>
    </citation>
    <scope>NUCLEOTIDE SEQUENCE [LARGE SCALE GENOMIC DNA]</scope>
    <source>
        <strain>ATCC 19977 / DSM 44196 / CCUG 20993 / CIP 104536 / JCM 13569 / NCTC 13031 / TMC 1543 / L948</strain>
    </source>
</reference>
<name>SUCC_MYCA9</name>
<gene>
    <name evidence="1" type="primary">sucC</name>
    <name type="ordered locus">MAB_1056</name>
</gene>
<protein>
    <recommendedName>
        <fullName evidence="1">Succinate--CoA ligase [ADP-forming] subunit beta</fullName>
        <ecNumber evidence="1">6.2.1.5</ecNumber>
    </recommendedName>
    <alternativeName>
        <fullName evidence="1">Succinyl-CoA synthetase subunit beta</fullName>
        <shortName evidence="1">SCS-beta</shortName>
    </alternativeName>
</protein>
<accession>B1MJJ0</accession>
<feature type="chain" id="PRO_1000129200" description="Succinate--CoA ligase [ADP-forming] subunit beta">
    <location>
        <begin position="1"/>
        <end position="389"/>
    </location>
</feature>
<feature type="domain" description="ATP-grasp" evidence="1">
    <location>
        <begin position="9"/>
        <end position="236"/>
    </location>
</feature>
<feature type="binding site" evidence="1">
    <location>
        <position position="45"/>
    </location>
    <ligand>
        <name>ATP</name>
        <dbReference type="ChEBI" id="CHEBI:30616"/>
    </ligand>
</feature>
<feature type="binding site" evidence="1">
    <location>
        <begin position="52"/>
        <end position="54"/>
    </location>
    <ligand>
        <name>ATP</name>
        <dbReference type="ChEBI" id="CHEBI:30616"/>
    </ligand>
</feature>
<feature type="binding site" evidence="1">
    <location>
        <position position="94"/>
    </location>
    <ligand>
        <name>ATP</name>
        <dbReference type="ChEBI" id="CHEBI:30616"/>
    </ligand>
</feature>
<feature type="binding site" evidence="1">
    <location>
        <position position="99"/>
    </location>
    <ligand>
        <name>ATP</name>
        <dbReference type="ChEBI" id="CHEBI:30616"/>
    </ligand>
</feature>
<feature type="binding site" evidence="1">
    <location>
        <position position="191"/>
    </location>
    <ligand>
        <name>Mg(2+)</name>
        <dbReference type="ChEBI" id="CHEBI:18420"/>
    </ligand>
</feature>
<feature type="binding site" evidence="1">
    <location>
        <position position="205"/>
    </location>
    <ligand>
        <name>Mg(2+)</name>
        <dbReference type="ChEBI" id="CHEBI:18420"/>
    </ligand>
</feature>
<feature type="binding site" evidence="1">
    <location>
        <position position="256"/>
    </location>
    <ligand>
        <name>substrate</name>
        <note>ligand shared with subunit alpha</note>
    </ligand>
</feature>
<feature type="binding site" evidence="1">
    <location>
        <begin position="318"/>
        <end position="320"/>
    </location>
    <ligand>
        <name>substrate</name>
        <note>ligand shared with subunit alpha</note>
    </ligand>
</feature>
<keyword id="KW-0067">ATP-binding</keyword>
<keyword id="KW-0436">Ligase</keyword>
<keyword id="KW-0460">Magnesium</keyword>
<keyword id="KW-0479">Metal-binding</keyword>
<keyword id="KW-0547">Nucleotide-binding</keyword>
<keyword id="KW-1185">Reference proteome</keyword>
<keyword id="KW-0816">Tricarboxylic acid cycle</keyword>